<proteinExistence type="evidence at protein level"/>
<dbReference type="EC" id="1.14.99.48" evidence="1 3"/>
<dbReference type="EMBL" id="BA000018">
    <property type="protein sequence ID" value="BAB41380.1"/>
    <property type="molecule type" value="Genomic_DNA"/>
</dbReference>
<dbReference type="PIR" id="A89778">
    <property type="entry name" value="A89778"/>
</dbReference>
<dbReference type="RefSeq" id="WP_000480603.1">
    <property type="nucleotide sequence ID" value="NC_002745.2"/>
</dbReference>
<dbReference type="PDB" id="2ZDP">
    <property type="method" value="X-ray"/>
    <property type="resolution" value="1.50 A"/>
    <property type="chains" value="A/B=1-108"/>
</dbReference>
<dbReference type="PDB" id="3LGM">
    <property type="method" value="X-ray"/>
    <property type="resolution" value="1.88 A"/>
    <property type="chains" value="A/B=1-108"/>
</dbReference>
<dbReference type="PDB" id="3LGN">
    <property type="method" value="X-ray"/>
    <property type="resolution" value="1.50 A"/>
    <property type="chains" value="A/B=1-108"/>
</dbReference>
<dbReference type="PDB" id="3QGP">
    <property type="method" value="X-ray"/>
    <property type="resolution" value="1.80 A"/>
    <property type="chains" value="A/B=1-108"/>
</dbReference>
<dbReference type="PDB" id="4FNH">
    <property type="method" value="X-ray"/>
    <property type="resolution" value="1.90 A"/>
    <property type="chains" value="A/B=1-108"/>
</dbReference>
<dbReference type="PDB" id="4FNI">
    <property type="method" value="X-ray"/>
    <property type="resolution" value="1.80 A"/>
    <property type="chains" value="A/B=1-108"/>
</dbReference>
<dbReference type="PDBsum" id="2ZDP"/>
<dbReference type="PDBsum" id="3LGM"/>
<dbReference type="PDBsum" id="3LGN"/>
<dbReference type="PDBsum" id="3QGP"/>
<dbReference type="PDBsum" id="4FNH"/>
<dbReference type="PDBsum" id="4FNI"/>
<dbReference type="SMR" id="Q7A827"/>
<dbReference type="EnsemblBacteria" id="BAB41380">
    <property type="protein sequence ID" value="BAB41380"/>
    <property type="gene ID" value="BAB41380"/>
</dbReference>
<dbReference type="KEGG" id="sau:SA0160"/>
<dbReference type="HOGENOM" id="CLU_141544_2_1_9"/>
<dbReference type="BioCyc" id="MetaCyc:MONOMER-20095"/>
<dbReference type="BRENDA" id="1.14.99.48">
    <property type="organism ID" value="3352"/>
</dbReference>
<dbReference type="EvolutionaryTrace" id="Q7A827"/>
<dbReference type="GO" id="GO:0005737">
    <property type="term" value="C:cytoplasm"/>
    <property type="evidence" value="ECO:0007669"/>
    <property type="project" value="UniProtKB-SubCell"/>
</dbReference>
<dbReference type="GO" id="GO:0020037">
    <property type="term" value="F:heme binding"/>
    <property type="evidence" value="ECO:0007669"/>
    <property type="project" value="UniProtKB-UniRule"/>
</dbReference>
<dbReference type="GO" id="GO:0004392">
    <property type="term" value="F:heme oxygenase (decyclizing) activity"/>
    <property type="evidence" value="ECO:0007669"/>
    <property type="project" value="UniProtKB-UniRule"/>
</dbReference>
<dbReference type="GO" id="GO:0005506">
    <property type="term" value="F:iron ion binding"/>
    <property type="evidence" value="ECO:0007669"/>
    <property type="project" value="UniProtKB-UniRule"/>
</dbReference>
<dbReference type="GO" id="GO:0042167">
    <property type="term" value="P:heme catabolic process"/>
    <property type="evidence" value="ECO:0007669"/>
    <property type="project" value="UniProtKB-UniRule"/>
</dbReference>
<dbReference type="GO" id="GO:0033212">
    <property type="term" value="P:iron import into cell"/>
    <property type="evidence" value="ECO:0007669"/>
    <property type="project" value="InterPro"/>
</dbReference>
<dbReference type="Gene3D" id="3.30.70.100">
    <property type="match status" value="1"/>
</dbReference>
<dbReference type="HAMAP" id="MF_01272">
    <property type="entry name" value="Heme_degrading_monooxygenase"/>
    <property type="match status" value="1"/>
</dbReference>
<dbReference type="InterPro" id="IPR007138">
    <property type="entry name" value="ABM_dom"/>
</dbReference>
<dbReference type="InterPro" id="IPR011008">
    <property type="entry name" value="Dimeric_a/b-barrel"/>
</dbReference>
<dbReference type="InterPro" id="IPR050404">
    <property type="entry name" value="Heme-degrading_MO"/>
</dbReference>
<dbReference type="InterPro" id="IPR023953">
    <property type="entry name" value="IsdG"/>
</dbReference>
<dbReference type="NCBIfam" id="NF009838">
    <property type="entry name" value="PRK13313.1"/>
    <property type="match status" value="1"/>
</dbReference>
<dbReference type="PANTHER" id="PTHR34474:SF4">
    <property type="entry name" value="HEME OXYGENASE (STAPHYLOBILIN-PRODUCING) 1"/>
    <property type="match status" value="1"/>
</dbReference>
<dbReference type="PANTHER" id="PTHR34474">
    <property type="entry name" value="SIGNAL TRANSDUCTION PROTEIN TRAP"/>
    <property type="match status" value="1"/>
</dbReference>
<dbReference type="Pfam" id="PF03992">
    <property type="entry name" value="ABM"/>
    <property type="match status" value="1"/>
</dbReference>
<dbReference type="SUPFAM" id="SSF54909">
    <property type="entry name" value="Dimeric alpha+beta barrel"/>
    <property type="match status" value="1"/>
</dbReference>
<dbReference type="PROSITE" id="PS51725">
    <property type="entry name" value="ABM"/>
    <property type="match status" value="1"/>
</dbReference>
<evidence type="ECO:0000255" key="1">
    <source>
        <dbReference type="HAMAP-Rule" id="MF_01272"/>
    </source>
</evidence>
<evidence type="ECO:0000269" key="2">
    <source>
    </source>
</evidence>
<evidence type="ECO:0000269" key="3">
    <source>
    </source>
</evidence>
<evidence type="ECO:0000269" key="4">
    <source>
    </source>
</evidence>
<evidence type="ECO:0000269" key="5">
    <source ref="5"/>
</evidence>
<evidence type="ECO:0007829" key="6">
    <source>
        <dbReference type="PDB" id="2ZDP"/>
    </source>
</evidence>
<evidence type="ECO:0007829" key="7">
    <source>
        <dbReference type="PDB" id="4FNH"/>
    </source>
</evidence>
<sequence length="108" mass="12791">MFMAENRLQLQKGSAEETIERFYNRQGIETIEGFQQMFVTKTLNTEDTDEVKILTIWESEDSFNNWLNSDVFKEAHKNVRLKSDDDGQQSPILSNKVFKYDIGYHYQK</sequence>
<keyword id="KW-0002">3D-structure</keyword>
<keyword id="KW-0963">Cytoplasm</keyword>
<keyword id="KW-0349">Heme</keyword>
<keyword id="KW-0408">Iron</keyword>
<keyword id="KW-0479">Metal-binding</keyword>
<keyword id="KW-0503">Monooxygenase</keyword>
<keyword id="KW-0560">Oxidoreductase</keyword>
<comment type="function">
    <text evidence="1 2 3">Allows bacterial pathogens to use the host heme as an iron source. Catalyzes the oxidative degradation of the heme macrocyclic porphyrin ring to the oxo-bilirubin chromophore staphylobilin (a mixture of the linear tetrapyrroles 5-oxo-delta-bilirubin and 15-oxo-beta-bilirubin) in the presence of a suitable electron donor such as ascorbate or NADPH--cytochrome P450 reductase, with subsequent release of free iron.</text>
</comment>
<comment type="catalytic activity">
    <reaction evidence="1 3">
        <text>heme b + 5 AH2 + 4 O2 + 2 H(+) = delta-staphylobilin + Fe(2+) + formaldehyde + 5 A + 4 H2O</text>
        <dbReference type="Rhea" id="RHEA:37039"/>
        <dbReference type="ChEBI" id="CHEBI:13193"/>
        <dbReference type="ChEBI" id="CHEBI:15377"/>
        <dbReference type="ChEBI" id="CHEBI:15378"/>
        <dbReference type="ChEBI" id="CHEBI:15379"/>
        <dbReference type="ChEBI" id="CHEBI:16842"/>
        <dbReference type="ChEBI" id="CHEBI:17499"/>
        <dbReference type="ChEBI" id="CHEBI:29033"/>
        <dbReference type="ChEBI" id="CHEBI:60344"/>
        <dbReference type="ChEBI" id="CHEBI:74361"/>
        <dbReference type="EC" id="1.14.99.48"/>
    </reaction>
</comment>
<comment type="catalytic activity">
    <reaction evidence="1 3">
        <text>heme b + 5 AH2 + 4 O2 + 2 H(+) = beta-staphylobilin + Fe(2+) + formaldehyde + 5 A + 4 H2O</text>
        <dbReference type="Rhea" id="RHEA:37363"/>
        <dbReference type="ChEBI" id="CHEBI:13193"/>
        <dbReference type="ChEBI" id="CHEBI:15377"/>
        <dbReference type="ChEBI" id="CHEBI:15378"/>
        <dbReference type="ChEBI" id="CHEBI:15379"/>
        <dbReference type="ChEBI" id="CHEBI:16842"/>
        <dbReference type="ChEBI" id="CHEBI:17499"/>
        <dbReference type="ChEBI" id="CHEBI:29033"/>
        <dbReference type="ChEBI" id="CHEBI:60344"/>
        <dbReference type="ChEBI" id="CHEBI:74362"/>
        <dbReference type="EC" id="1.14.99.48"/>
    </reaction>
</comment>
<comment type="subunit">
    <text evidence="1 2 3 4 5">Homodimer.</text>
</comment>
<comment type="subcellular location">
    <subcellularLocation>
        <location evidence="1">Cytoplasm</location>
    </subcellularLocation>
</comment>
<comment type="similarity">
    <text evidence="1">Belongs to the antibiotic biosynthesis monooxygenase family. Heme-degrading monooxygenase IsdG subfamily.</text>
</comment>
<accession>Q7A827</accession>
<gene>
    <name type="primary">isdI</name>
    <name type="ordered locus">SA0160</name>
</gene>
<protein>
    <recommendedName>
        <fullName evidence="1">Heme oxygenase (staphylobilin-producing) 2</fullName>
        <ecNumber evidence="1 3">1.14.99.48</ecNumber>
    </recommendedName>
    <alternativeName>
        <fullName evidence="1">Heme-degrading monooxygenase 2</fullName>
    </alternativeName>
    <alternativeName>
        <fullName evidence="1">Iron-regulated surface determinant 2</fullName>
    </alternativeName>
    <alternativeName>
        <fullName evidence="1">Iron-responsive surface determinant 2</fullName>
    </alternativeName>
</protein>
<reference key="1">
    <citation type="journal article" date="2001" name="Lancet">
        <title>Whole genome sequencing of meticillin-resistant Staphylococcus aureus.</title>
        <authorList>
            <person name="Kuroda M."/>
            <person name="Ohta T."/>
            <person name="Uchiyama I."/>
            <person name="Baba T."/>
            <person name="Yuzawa H."/>
            <person name="Kobayashi I."/>
            <person name="Cui L."/>
            <person name="Oguchi A."/>
            <person name="Aoki K."/>
            <person name="Nagai Y."/>
            <person name="Lian J.-Q."/>
            <person name="Ito T."/>
            <person name="Kanamori M."/>
            <person name="Matsumaru H."/>
            <person name="Maruyama A."/>
            <person name="Murakami H."/>
            <person name="Hosoyama A."/>
            <person name="Mizutani-Ui Y."/>
            <person name="Takahashi N.K."/>
            <person name="Sawano T."/>
            <person name="Inoue R."/>
            <person name="Kaito C."/>
            <person name="Sekimizu K."/>
            <person name="Hirakawa H."/>
            <person name="Kuhara S."/>
            <person name="Goto S."/>
            <person name="Yabuzaki J."/>
            <person name="Kanehisa M."/>
            <person name="Yamashita A."/>
            <person name="Oshima K."/>
            <person name="Furuya K."/>
            <person name="Yoshino C."/>
            <person name="Shiba T."/>
            <person name="Hattori M."/>
            <person name="Ogasawara N."/>
            <person name="Hayashi H."/>
            <person name="Hiramatsu K."/>
        </authorList>
    </citation>
    <scope>NUCLEOTIDE SEQUENCE [LARGE SCALE GENOMIC DNA]</scope>
    <source>
        <strain>N315</strain>
    </source>
</reference>
<reference key="2">
    <citation type="submission" date="2007-10" db="UniProtKB">
        <title>Shotgun proteomic analysis of total and membrane protein extracts of S. aureus strain N315.</title>
        <authorList>
            <person name="Vaezzadeh A.R."/>
            <person name="Deshusses J."/>
            <person name="Lescuyer P."/>
            <person name="Hochstrasser D.F."/>
        </authorList>
    </citation>
    <scope>IDENTIFICATION BY MASS SPECTROMETRY [LARGE SCALE ANALYSIS]</scope>
    <source>
        <strain>N315</strain>
    </source>
</reference>
<reference key="3">
    <citation type="journal article" date="2008" name="J. Biol. Chem.">
        <title>Ruffling of metalloporphyrins bound to IsdG and IsdI, two heme-degrading enzymes in Staphylococcus aureus.</title>
        <authorList>
            <person name="Lee W.C."/>
            <person name="Reniere M.L."/>
            <person name="Skaar E.P."/>
            <person name="Murphy M.E."/>
        </authorList>
    </citation>
    <scope>X-RAY CRYSTALLOGRAPHY (1.50 ANGSTROMS) OF 1-108 IN COMPLEX WITH HEME</scope>
    <scope>FUNCTION</scope>
    <scope>SUBUNIT</scope>
</reference>
<reference key="4">
    <citation type="journal article" date="2010" name="Mol. Microbiol.">
        <title>The IsdG-family of haem oxygenases degrades haem to a novel chromophore.</title>
        <authorList>
            <person name="Reniere M.L."/>
            <person name="Ukpabi G.N."/>
            <person name="Harry S.R."/>
            <person name="Stec D.F."/>
            <person name="Krull R."/>
            <person name="Wright D.W."/>
            <person name="Bachmann B.O."/>
            <person name="Murphy M.E."/>
            <person name="Skaar E.P."/>
        </authorList>
    </citation>
    <scope>X-RAY CRYSTALLOGRAPHY (1.50 ANGSTROMS) OF 1-108 IN COMPLEX WITH HEME</scope>
    <scope>FUNCTION</scope>
    <scope>CATALYTIC ACTIVITY</scope>
    <scope>SUBUNIT</scope>
</reference>
<reference key="5">
    <citation type="submission" date="2011-01" db="PDB data bank">
        <title>Heme ruffling enables the catalytic activity of the heme degrading enzyme IsdI.</title>
        <authorList>
            <person name="Takayama S.J."/>
            <person name="Ukpabi G.N."/>
            <person name="Murphy M.E.P."/>
            <person name="Mauk A.G."/>
        </authorList>
    </citation>
    <scope>X-RAY CRYSTALLOGRAPHY (1.80 ANGSTROMS) OF 1-108 IN COMPLEX WITH HEME</scope>
    <scope>SUBUNIT</scope>
</reference>
<reference key="6">
    <citation type="journal article" date="2012" name="J. Biol. Chem.">
        <title>Inactivation of the heme degrading enzyme IsdI by an active site substitution that diminishes heme ruffling.</title>
        <authorList>
            <person name="Ukpabi G."/>
            <person name="Takayama S.J."/>
            <person name="Mauk A.G."/>
            <person name="Murphy M.E."/>
        </authorList>
    </citation>
    <scope>X-RAY CRYSTALLOGRAPHY (1.80 ANGSTROMS) OF 1-108 OF MUTANT THR-66 IN COMPLEX WITH HEME</scope>
    <scope>MUTAGENESIS OF TRP-66</scope>
    <scope>SUBUNIT</scope>
</reference>
<name>HDOX2_STAAN</name>
<organism>
    <name type="scientific">Staphylococcus aureus (strain N315)</name>
    <dbReference type="NCBI Taxonomy" id="158879"/>
    <lineage>
        <taxon>Bacteria</taxon>
        <taxon>Bacillati</taxon>
        <taxon>Bacillota</taxon>
        <taxon>Bacilli</taxon>
        <taxon>Bacillales</taxon>
        <taxon>Staphylococcaceae</taxon>
        <taxon>Staphylococcus</taxon>
    </lineage>
</organism>
<feature type="chain" id="PRO_0000270092" description="Heme oxygenase (staphylobilin-producing) 2">
    <location>
        <begin position="1"/>
        <end position="108"/>
    </location>
</feature>
<feature type="domain" description="ABM" evidence="1">
    <location>
        <begin position="2"/>
        <end position="93"/>
    </location>
</feature>
<feature type="binding site">
    <location>
        <position position="6"/>
    </location>
    <ligand>
        <name>Fe cation</name>
        <dbReference type="ChEBI" id="CHEBI:24875"/>
    </ligand>
</feature>
<feature type="binding site">
    <location>
        <begin position="21"/>
        <end position="28"/>
    </location>
    <ligand>
        <name>heme</name>
        <dbReference type="ChEBI" id="CHEBI:30413"/>
    </ligand>
</feature>
<feature type="binding site" description="axial binding residue">
    <location>
        <position position="76"/>
    </location>
    <ligand>
        <name>heme</name>
        <dbReference type="ChEBI" id="CHEBI:30413"/>
    </ligand>
    <ligandPart>
        <name>Fe</name>
        <dbReference type="ChEBI" id="CHEBI:18248"/>
    </ligandPart>
</feature>
<feature type="site" description="Transition state stabilizer">
    <location>
        <position position="66"/>
    </location>
</feature>
<feature type="mutagenesis site" description="Inactive." evidence="4">
    <original>W</original>
    <variation>A</variation>
    <location>
        <position position="66"/>
    </location>
</feature>
<feature type="mutagenesis site" description="Heme degradation activity is approximately half that of the wild-type enzyme." evidence="4">
    <original>W</original>
    <variation>F</variation>
    <location>
        <position position="66"/>
    </location>
</feature>
<feature type="mutagenesis site" description="Inactive." evidence="4">
    <original>W</original>
    <variation>L</variation>
    <location>
        <position position="66"/>
    </location>
</feature>
<feature type="mutagenesis site" description="Heme degradation activity is approximately half that of the wild-type enzyme. Heme binds to this enzyme with less heme ruffling than observed for wild-type." evidence="4">
    <original>W</original>
    <variation>Y</variation>
    <location>
        <position position="66"/>
    </location>
</feature>
<feature type="strand" evidence="6">
    <location>
        <begin position="2"/>
        <end position="10"/>
    </location>
</feature>
<feature type="helix" evidence="6">
    <location>
        <begin position="15"/>
        <end position="20"/>
    </location>
</feature>
<feature type="helix" evidence="7">
    <location>
        <begin position="21"/>
        <end position="23"/>
    </location>
</feature>
<feature type="helix" evidence="6">
    <location>
        <begin position="28"/>
        <end position="30"/>
    </location>
</feature>
<feature type="strand" evidence="6">
    <location>
        <begin position="34"/>
        <end position="42"/>
    </location>
</feature>
<feature type="strand" evidence="6">
    <location>
        <begin position="47"/>
        <end position="58"/>
    </location>
</feature>
<feature type="helix" evidence="6">
    <location>
        <begin position="60"/>
        <end position="67"/>
    </location>
</feature>
<feature type="helix" evidence="6">
    <location>
        <begin position="70"/>
        <end position="75"/>
    </location>
</feature>
<feature type="turn" evidence="6">
    <location>
        <begin position="76"/>
        <end position="78"/>
    </location>
</feature>
<feature type="strand" evidence="6">
    <location>
        <begin position="92"/>
        <end position="107"/>
    </location>
</feature>